<keyword id="KW-0963">Cytoplasm</keyword>
<keyword id="KW-0539">Nucleus</keyword>
<keyword id="KW-0687">Ribonucleoprotein</keyword>
<keyword id="KW-0689">Ribosomal protein</keyword>
<organism>
    <name type="scientific">Ictalurus punctatus</name>
    <name type="common">Channel catfish</name>
    <name type="synonym">Silurus punctatus</name>
    <dbReference type="NCBI Taxonomy" id="7998"/>
    <lineage>
        <taxon>Eukaryota</taxon>
        <taxon>Metazoa</taxon>
        <taxon>Chordata</taxon>
        <taxon>Craniata</taxon>
        <taxon>Vertebrata</taxon>
        <taxon>Euteleostomi</taxon>
        <taxon>Actinopterygii</taxon>
        <taxon>Neopterygii</taxon>
        <taxon>Teleostei</taxon>
        <taxon>Ostariophysi</taxon>
        <taxon>Siluriformes</taxon>
        <taxon>Ictaluridae</taxon>
        <taxon>Ictalurus</taxon>
    </lineage>
</organism>
<protein>
    <recommendedName>
        <fullName evidence="3">Small ribosomal subunit protein eS10</fullName>
    </recommendedName>
    <alternativeName>
        <fullName>40S ribosomal protein S10</fullName>
    </alternativeName>
</protein>
<comment type="function">
    <text evidence="1">Component of the 40S ribosomal subunit. The ribosome is a large ribonucleoprotein complex responsible for the synthesis of proteins in the cell.</text>
</comment>
<comment type="subunit">
    <text evidence="1">Component of the small ribosomal subunit.</text>
</comment>
<comment type="subcellular location">
    <subcellularLocation>
        <location evidence="1">Cytoplasm</location>
    </subcellularLocation>
    <subcellularLocation>
        <location evidence="1">Nucleus</location>
        <location evidence="1">Nucleolus</location>
    </subcellularLocation>
</comment>
<comment type="similarity">
    <text evidence="3">Belongs to the eukaryotic ribosomal protein eS10 family.</text>
</comment>
<proteinExistence type="evidence at transcript level"/>
<reference key="1">
    <citation type="journal article" date="2002" name="Gene">
        <title>Translational machinery of channel catfish: I. A transcriptomic approach to the analysis of 32 40S ribosomal protein genes and their expression.</title>
        <authorList>
            <person name="Karsi A."/>
            <person name="Patterson A."/>
            <person name="Feng J."/>
            <person name="Liu Z.-J."/>
        </authorList>
    </citation>
    <scope>NUCLEOTIDE SEQUENCE [MRNA]</scope>
</reference>
<gene>
    <name type="primary">rps10</name>
</gene>
<dbReference type="EMBL" id="AF402818">
    <property type="protein sequence ID" value="AAK95192.1"/>
    <property type="molecule type" value="mRNA"/>
</dbReference>
<dbReference type="RefSeq" id="NP_001187075.1">
    <property type="nucleotide sequence ID" value="NM_001200146.1"/>
</dbReference>
<dbReference type="SMR" id="Q90YR4"/>
<dbReference type="STRING" id="7998.ENSIPUP00000037154"/>
<dbReference type="GeneID" id="100304564"/>
<dbReference type="KEGG" id="ipu:100304564"/>
<dbReference type="CTD" id="6204"/>
<dbReference type="OMA" id="YRRRDQE"/>
<dbReference type="OrthoDB" id="5211809at2759"/>
<dbReference type="Proteomes" id="UP000221080">
    <property type="component" value="Chromosome 11"/>
</dbReference>
<dbReference type="GO" id="GO:0022627">
    <property type="term" value="C:cytosolic small ribosomal subunit"/>
    <property type="evidence" value="ECO:0007669"/>
    <property type="project" value="TreeGrafter"/>
</dbReference>
<dbReference type="GO" id="GO:0005730">
    <property type="term" value="C:nucleolus"/>
    <property type="evidence" value="ECO:0007669"/>
    <property type="project" value="UniProtKB-SubCell"/>
</dbReference>
<dbReference type="GO" id="GO:0003723">
    <property type="term" value="F:RNA binding"/>
    <property type="evidence" value="ECO:0007669"/>
    <property type="project" value="TreeGrafter"/>
</dbReference>
<dbReference type="GO" id="GO:0003735">
    <property type="term" value="F:structural constituent of ribosome"/>
    <property type="evidence" value="ECO:0007669"/>
    <property type="project" value="TreeGrafter"/>
</dbReference>
<dbReference type="FunFam" id="1.10.10.10:FF:001335">
    <property type="entry name" value="40S ribosomal protein S10"/>
    <property type="match status" value="1"/>
</dbReference>
<dbReference type="Gene3D" id="1.10.10.10">
    <property type="entry name" value="Winged helix-like DNA-binding domain superfamily/Winged helix DNA-binding domain"/>
    <property type="match status" value="1"/>
</dbReference>
<dbReference type="InterPro" id="IPR005326">
    <property type="entry name" value="Plectin_eS10_N"/>
</dbReference>
<dbReference type="InterPro" id="IPR037447">
    <property type="entry name" value="Ribosomal_eS10"/>
</dbReference>
<dbReference type="InterPro" id="IPR036388">
    <property type="entry name" value="WH-like_DNA-bd_sf"/>
</dbReference>
<dbReference type="PANTHER" id="PTHR12146">
    <property type="entry name" value="40S RIBOSOMAL PROTEIN S10"/>
    <property type="match status" value="1"/>
</dbReference>
<dbReference type="PANTHER" id="PTHR12146:SF0">
    <property type="entry name" value="RIBOSOMAL PROTEIN S10"/>
    <property type="match status" value="1"/>
</dbReference>
<dbReference type="Pfam" id="PF03501">
    <property type="entry name" value="S10_plectin"/>
    <property type="match status" value="1"/>
</dbReference>
<accession>Q90YR4</accession>
<sequence length="166" mass="18854">MLMPKKNRIAIYELLFKEGVMVAKKDVHLAKHPELADKNVPNLHVMKAMQSLKSCGYVKEQFAWRHFYWYLTNEGIQYLRDFLHLPPEIVPATLRRQTRPETARPRPKGLEGERPARLARGEGDRDAYRRSAAPPGADKKAEAGAGAATEFQFRGGFGRGRGQQPQ</sequence>
<name>RS10_ICTPU</name>
<evidence type="ECO:0000250" key="1">
    <source>
        <dbReference type="UniProtKB" id="P46783"/>
    </source>
</evidence>
<evidence type="ECO:0000256" key="2">
    <source>
        <dbReference type="SAM" id="MobiDB-lite"/>
    </source>
</evidence>
<evidence type="ECO:0000305" key="3"/>
<feature type="chain" id="PRO_0000116363" description="Small ribosomal subunit protein eS10">
    <location>
        <begin position="1"/>
        <end position="166"/>
    </location>
</feature>
<feature type="region of interest" description="Disordered" evidence="2">
    <location>
        <begin position="95"/>
        <end position="166"/>
    </location>
</feature>
<feature type="compositionally biased region" description="Basic and acidic residues" evidence="2">
    <location>
        <begin position="98"/>
        <end position="129"/>
    </location>
</feature>
<feature type="compositionally biased region" description="Low complexity" evidence="2">
    <location>
        <begin position="143"/>
        <end position="154"/>
    </location>
</feature>
<feature type="compositionally biased region" description="Gly residues" evidence="2">
    <location>
        <begin position="155"/>
        <end position="166"/>
    </location>
</feature>